<keyword id="KW-0274">FAD</keyword>
<keyword id="KW-0285">Flavoprotein</keyword>
<keyword id="KW-0560">Oxidoreductase</keyword>
<keyword id="KW-0816">Tricarboxylic acid cycle</keyword>
<name>MQO_PARMW</name>
<protein>
    <recommendedName>
        <fullName evidence="1">Probable malate:quinone oxidoreductase</fullName>
        <ecNumber evidence="1">1.1.5.4</ecNumber>
    </recommendedName>
    <alternativeName>
        <fullName evidence="1">MQO</fullName>
    </alternativeName>
    <alternativeName>
        <fullName evidence="1">Malate dehydrogenase [quinone]</fullName>
    </alternativeName>
</protein>
<gene>
    <name evidence="1" type="primary">mqo</name>
    <name type="ordered locus">SYNW1686</name>
</gene>
<evidence type="ECO:0000255" key="1">
    <source>
        <dbReference type="HAMAP-Rule" id="MF_00212"/>
    </source>
</evidence>
<comment type="catalytic activity">
    <reaction evidence="1">
        <text>(S)-malate + a quinone = a quinol + oxaloacetate</text>
        <dbReference type="Rhea" id="RHEA:46012"/>
        <dbReference type="ChEBI" id="CHEBI:15589"/>
        <dbReference type="ChEBI" id="CHEBI:16452"/>
        <dbReference type="ChEBI" id="CHEBI:24646"/>
        <dbReference type="ChEBI" id="CHEBI:132124"/>
        <dbReference type="EC" id="1.1.5.4"/>
    </reaction>
</comment>
<comment type="cofactor">
    <cofactor evidence="1">
        <name>FAD</name>
        <dbReference type="ChEBI" id="CHEBI:57692"/>
    </cofactor>
</comment>
<comment type="pathway">
    <text evidence="1">Carbohydrate metabolism; tricarboxylic acid cycle; oxaloacetate from (S)-malate (quinone route): step 1/1.</text>
</comment>
<comment type="similarity">
    <text evidence="1">Belongs to the MQO family.</text>
</comment>
<accession>Q7U5L7</accession>
<feature type="chain" id="PRO_0000128757" description="Probable malate:quinone oxidoreductase">
    <location>
        <begin position="1"/>
        <end position="502"/>
    </location>
</feature>
<organism>
    <name type="scientific">Parasynechococcus marenigrum (strain WH8102)</name>
    <dbReference type="NCBI Taxonomy" id="84588"/>
    <lineage>
        <taxon>Bacteria</taxon>
        <taxon>Bacillati</taxon>
        <taxon>Cyanobacteriota</taxon>
        <taxon>Cyanophyceae</taxon>
        <taxon>Synechococcales</taxon>
        <taxon>Prochlorococcaceae</taxon>
        <taxon>Parasynechococcus</taxon>
        <taxon>Parasynechococcus marenigrum</taxon>
    </lineage>
</organism>
<proteinExistence type="inferred from homology"/>
<sequence>MQQDGSFSADARFDAVLVGAGIMSATLAALLHELDPGLRLLLVERLEGPARESSAANNNAGTGHAANCELNYTPMQADGTVATAKAVAINAGFERSLEFWGSLRERGELDTSSFLHQAAHISAVWTAENIAFLRQRFEQLSEIPAFAAMRWSEERTELTDWMPLVMAGRDLKQPVAATRIERGTDVDFGALTRAYLEPLQRSGALCVEYGTQVRDIKRLRRGDMTEADWRVILQGPSGKREVRAPFVFLGAGGGALPLLQRSGIPEADDFAGFPVSGLWLVCGDAQLAAKQRAKVYGKAAVGAPPMSVPHLDTRWIDGQRSLLFGPFAGFSSKFLKQGSLFDLPSSVRPTNLLPMLQVGATNIELVQYLINQLRQSPEERHDALQQFMPTARAEDWSLSVAGQRVQIIKRSKQGGRLQLGTEVVASMDGSLAALLGASPGASTAVTIMLEVLQRCFKQRLASAAWNERLQALLPSIGGDPVQDPALLLAMRQRSDALLDLQG</sequence>
<dbReference type="EC" id="1.1.5.4" evidence="1"/>
<dbReference type="EMBL" id="BX569693">
    <property type="protein sequence ID" value="CAE08201.1"/>
    <property type="molecule type" value="Genomic_DNA"/>
</dbReference>
<dbReference type="RefSeq" id="WP_011128548.1">
    <property type="nucleotide sequence ID" value="NC_005070.1"/>
</dbReference>
<dbReference type="SMR" id="Q7U5L7"/>
<dbReference type="STRING" id="84588.SYNW1686"/>
<dbReference type="KEGG" id="syw:SYNW1686"/>
<dbReference type="eggNOG" id="COG0579">
    <property type="taxonomic scope" value="Bacteria"/>
</dbReference>
<dbReference type="HOGENOM" id="CLU_028151_0_0_3"/>
<dbReference type="UniPathway" id="UPA00223">
    <property type="reaction ID" value="UER01008"/>
</dbReference>
<dbReference type="Proteomes" id="UP000001422">
    <property type="component" value="Chromosome"/>
</dbReference>
<dbReference type="GO" id="GO:0047545">
    <property type="term" value="F:2-hydroxyglutarate dehydrogenase activity"/>
    <property type="evidence" value="ECO:0007669"/>
    <property type="project" value="TreeGrafter"/>
</dbReference>
<dbReference type="GO" id="GO:0008924">
    <property type="term" value="F:L-malate dehydrogenase (quinone) activity"/>
    <property type="evidence" value="ECO:0007669"/>
    <property type="project" value="UniProtKB-UniRule"/>
</dbReference>
<dbReference type="GO" id="GO:0006099">
    <property type="term" value="P:tricarboxylic acid cycle"/>
    <property type="evidence" value="ECO:0007669"/>
    <property type="project" value="UniProtKB-UniRule"/>
</dbReference>
<dbReference type="Gene3D" id="3.50.50.60">
    <property type="entry name" value="FAD/NAD(P)-binding domain"/>
    <property type="match status" value="1"/>
</dbReference>
<dbReference type="HAMAP" id="MF_00212">
    <property type="entry name" value="MQO"/>
    <property type="match status" value="1"/>
</dbReference>
<dbReference type="InterPro" id="IPR036188">
    <property type="entry name" value="FAD/NAD-bd_sf"/>
</dbReference>
<dbReference type="InterPro" id="IPR006231">
    <property type="entry name" value="MQO"/>
</dbReference>
<dbReference type="NCBIfam" id="TIGR01320">
    <property type="entry name" value="mal_quin_oxido"/>
    <property type="match status" value="1"/>
</dbReference>
<dbReference type="NCBIfam" id="NF003606">
    <property type="entry name" value="PRK05257.2-1"/>
    <property type="match status" value="1"/>
</dbReference>
<dbReference type="NCBIfam" id="NF003607">
    <property type="entry name" value="PRK05257.2-3"/>
    <property type="match status" value="1"/>
</dbReference>
<dbReference type="NCBIfam" id="NF003611">
    <property type="entry name" value="PRK05257.3-2"/>
    <property type="match status" value="1"/>
</dbReference>
<dbReference type="PANTHER" id="PTHR43104">
    <property type="entry name" value="L-2-HYDROXYGLUTARATE DEHYDROGENASE, MITOCHONDRIAL"/>
    <property type="match status" value="1"/>
</dbReference>
<dbReference type="PANTHER" id="PTHR43104:SF2">
    <property type="entry name" value="L-2-HYDROXYGLUTARATE DEHYDROGENASE, MITOCHONDRIAL"/>
    <property type="match status" value="1"/>
</dbReference>
<dbReference type="Pfam" id="PF06039">
    <property type="entry name" value="Mqo"/>
    <property type="match status" value="1"/>
</dbReference>
<dbReference type="SUPFAM" id="SSF51905">
    <property type="entry name" value="FAD/NAD(P)-binding domain"/>
    <property type="match status" value="1"/>
</dbReference>
<reference key="1">
    <citation type="journal article" date="2003" name="Nature">
        <title>The genome of a motile marine Synechococcus.</title>
        <authorList>
            <person name="Palenik B."/>
            <person name="Brahamsha B."/>
            <person name="Larimer F.W."/>
            <person name="Land M.L."/>
            <person name="Hauser L."/>
            <person name="Chain P."/>
            <person name="Lamerdin J.E."/>
            <person name="Regala W."/>
            <person name="Allen E.E."/>
            <person name="McCarren J."/>
            <person name="Paulsen I.T."/>
            <person name="Dufresne A."/>
            <person name="Partensky F."/>
            <person name="Webb E.A."/>
            <person name="Waterbury J."/>
        </authorList>
    </citation>
    <scope>NUCLEOTIDE SEQUENCE [LARGE SCALE GENOMIC DNA]</scope>
    <source>
        <strain>WH8102</strain>
    </source>
</reference>